<keyword id="KW-0067">ATP-binding</keyword>
<keyword id="KW-0436">Ligase</keyword>
<keyword id="KW-0460">Magnesium</keyword>
<keyword id="KW-0479">Metal-binding</keyword>
<keyword id="KW-0547">Nucleotide-binding</keyword>
<keyword id="KW-1185">Reference proteome</keyword>
<keyword id="KW-0816">Tricarboxylic acid cycle</keyword>
<organism>
    <name type="scientific">Zymomonas mobilis subsp. mobilis (strain ATCC 31821 / ZM4 / CP4)</name>
    <dbReference type="NCBI Taxonomy" id="264203"/>
    <lineage>
        <taxon>Bacteria</taxon>
        <taxon>Pseudomonadati</taxon>
        <taxon>Pseudomonadota</taxon>
        <taxon>Alphaproteobacteria</taxon>
        <taxon>Sphingomonadales</taxon>
        <taxon>Zymomonadaceae</taxon>
        <taxon>Zymomonas</taxon>
    </lineage>
</organism>
<name>SUCC_ZYMMO</name>
<proteinExistence type="inferred from homology"/>
<reference key="1">
    <citation type="journal article" date="2005" name="Nat. Biotechnol.">
        <title>The genome sequence of the ethanologenic bacterium Zymomonas mobilis ZM4.</title>
        <authorList>
            <person name="Seo J.-S."/>
            <person name="Chong H."/>
            <person name="Park H.S."/>
            <person name="Yoon K.-O."/>
            <person name="Jung C."/>
            <person name="Kim J.J."/>
            <person name="Hong J.H."/>
            <person name="Kim H."/>
            <person name="Kim J.-H."/>
            <person name="Kil J.-I."/>
            <person name="Park C.J."/>
            <person name="Oh H.-M."/>
            <person name="Lee J.-S."/>
            <person name="Jin S.-J."/>
            <person name="Um H.-W."/>
            <person name="Lee H.-J."/>
            <person name="Oh S.-J."/>
            <person name="Kim J.Y."/>
            <person name="Kang H.L."/>
            <person name="Lee S.Y."/>
            <person name="Lee K.J."/>
            <person name="Kang H.S."/>
        </authorList>
    </citation>
    <scope>NUCLEOTIDE SEQUENCE [LARGE SCALE GENOMIC DNA]</scope>
    <source>
        <strain>ATCC 31821 / ZM4 / CP4</strain>
    </source>
</reference>
<gene>
    <name evidence="1" type="primary">sucC</name>
    <name type="ordered locus">ZMO1481</name>
</gene>
<comment type="function">
    <text evidence="1">Succinyl-CoA synthetase functions in the citric acid cycle (TCA), coupling the hydrolysis of succinyl-CoA to the synthesis of either ATP or GTP and thus represents the only step of substrate-level phosphorylation in the TCA. The beta subunit provides nucleotide specificity of the enzyme and binds the substrate succinate, while the binding sites for coenzyme A and phosphate are found in the alpha subunit.</text>
</comment>
<comment type="catalytic activity">
    <reaction evidence="1">
        <text>succinate + ATP + CoA = succinyl-CoA + ADP + phosphate</text>
        <dbReference type="Rhea" id="RHEA:17661"/>
        <dbReference type="ChEBI" id="CHEBI:30031"/>
        <dbReference type="ChEBI" id="CHEBI:30616"/>
        <dbReference type="ChEBI" id="CHEBI:43474"/>
        <dbReference type="ChEBI" id="CHEBI:57287"/>
        <dbReference type="ChEBI" id="CHEBI:57292"/>
        <dbReference type="ChEBI" id="CHEBI:456216"/>
        <dbReference type="EC" id="6.2.1.5"/>
    </reaction>
    <physiologicalReaction direction="right-to-left" evidence="1">
        <dbReference type="Rhea" id="RHEA:17663"/>
    </physiologicalReaction>
</comment>
<comment type="catalytic activity">
    <reaction evidence="1">
        <text>GTP + succinate + CoA = succinyl-CoA + GDP + phosphate</text>
        <dbReference type="Rhea" id="RHEA:22120"/>
        <dbReference type="ChEBI" id="CHEBI:30031"/>
        <dbReference type="ChEBI" id="CHEBI:37565"/>
        <dbReference type="ChEBI" id="CHEBI:43474"/>
        <dbReference type="ChEBI" id="CHEBI:57287"/>
        <dbReference type="ChEBI" id="CHEBI:57292"/>
        <dbReference type="ChEBI" id="CHEBI:58189"/>
    </reaction>
    <physiologicalReaction direction="right-to-left" evidence="1">
        <dbReference type="Rhea" id="RHEA:22122"/>
    </physiologicalReaction>
</comment>
<comment type="cofactor">
    <cofactor evidence="1">
        <name>Mg(2+)</name>
        <dbReference type="ChEBI" id="CHEBI:18420"/>
    </cofactor>
    <text evidence="1">Binds 1 Mg(2+) ion per subunit.</text>
</comment>
<comment type="pathway">
    <text evidence="1">Carbohydrate metabolism; tricarboxylic acid cycle; succinate from succinyl-CoA (ligase route): step 1/1.</text>
</comment>
<comment type="subunit">
    <text evidence="1">Heterotetramer of two alpha and two beta subunits.</text>
</comment>
<comment type="similarity">
    <text evidence="1">Belongs to the succinate/malate CoA ligase beta subunit family.</text>
</comment>
<accession>Q5NMF5</accession>
<sequence>MNIYEYQAMALLNERGVSVVPGYMAANVEEAVKAAEQLSSPPYVIKSQILAGGRGKGYFRESPKEGGGVRLVSDIAAVKKQAESMLGRHLVTAQTDDQGIPVEKLLITEAVSIAREFYLSLLVDRQTGRVTFVASPEGGMDIETVAKEKPEAIHRIAIDPATGFQPHHGRMIGFALGLSGDVFKQGIKLAASLYKAFTTSDMSLLEINPLVETNDGKLLPVDAKISFDDNALFRHPDIAALGEAGASDPLEQEARQAGLSYIKLDGSIGCMVNGAGLAMGTMDIIQLHGEMPANFLDVGGGASKEKVAAAFRIILSDPSVKGILVNIFGGIMRCDILAEGIIAAARELDITVPLVVRLEGNNVNEGKAALVSSGLPIITASDLGDAAQKIVAAIRQTA</sequence>
<protein>
    <recommendedName>
        <fullName evidence="1">Succinate--CoA ligase [ADP-forming] subunit beta</fullName>
        <ecNumber evidence="1">6.2.1.5</ecNumber>
    </recommendedName>
    <alternativeName>
        <fullName evidence="1">Succinyl-CoA synthetase subunit beta</fullName>
        <shortName evidence="1">SCS-beta</shortName>
    </alternativeName>
</protein>
<dbReference type="EC" id="6.2.1.5" evidence="1"/>
<dbReference type="EMBL" id="AE008692">
    <property type="protein sequence ID" value="AAV90105.1"/>
    <property type="molecule type" value="Genomic_DNA"/>
</dbReference>
<dbReference type="RefSeq" id="WP_011241256.1">
    <property type="nucleotide sequence ID" value="NZ_CP035711.1"/>
</dbReference>
<dbReference type="SMR" id="Q5NMF5"/>
<dbReference type="STRING" id="264203.ZMO1481"/>
<dbReference type="KEGG" id="zmo:ZMO1481"/>
<dbReference type="eggNOG" id="COG0045">
    <property type="taxonomic scope" value="Bacteria"/>
</dbReference>
<dbReference type="HOGENOM" id="CLU_037430_0_2_5"/>
<dbReference type="UniPathway" id="UPA00223">
    <property type="reaction ID" value="UER00999"/>
</dbReference>
<dbReference type="Proteomes" id="UP000001173">
    <property type="component" value="Chromosome"/>
</dbReference>
<dbReference type="GO" id="GO:0005829">
    <property type="term" value="C:cytosol"/>
    <property type="evidence" value="ECO:0007669"/>
    <property type="project" value="TreeGrafter"/>
</dbReference>
<dbReference type="GO" id="GO:0042709">
    <property type="term" value="C:succinate-CoA ligase complex"/>
    <property type="evidence" value="ECO:0007669"/>
    <property type="project" value="TreeGrafter"/>
</dbReference>
<dbReference type="GO" id="GO:0005524">
    <property type="term" value="F:ATP binding"/>
    <property type="evidence" value="ECO:0007669"/>
    <property type="project" value="UniProtKB-UniRule"/>
</dbReference>
<dbReference type="GO" id="GO:0000287">
    <property type="term" value="F:magnesium ion binding"/>
    <property type="evidence" value="ECO:0007669"/>
    <property type="project" value="UniProtKB-UniRule"/>
</dbReference>
<dbReference type="GO" id="GO:0004775">
    <property type="term" value="F:succinate-CoA ligase (ADP-forming) activity"/>
    <property type="evidence" value="ECO:0007669"/>
    <property type="project" value="UniProtKB-UniRule"/>
</dbReference>
<dbReference type="GO" id="GO:0004776">
    <property type="term" value="F:succinate-CoA ligase (GDP-forming) activity"/>
    <property type="evidence" value="ECO:0007669"/>
    <property type="project" value="RHEA"/>
</dbReference>
<dbReference type="GO" id="GO:0006104">
    <property type="term" value="P:succinyl-CoA metabolic process"/>
    <property type="evidence" value="ECO:0007669"/>
    <property type="project" value="TreeGrafter"/>
</dbReference>
<dbReference type="GO" id="GO:0006099">
    <property type="term" value="P:tricarboxylic acid cycle"/>
    <property type="evidence" value="ECO:0007669"/>
    <property type="project" value="UniProtKB-UniRule"/>
</dbReference>
<dbReference type="FunFam" id="3.30.1490.20:FF:000002">
    <property type="entry name" value="Succinate--CoA ligase [ADP-forming] subunit beta"/>
    <property type="match status" value="1"/>
</dbReference>
<dbReference type="FunFam" id="3.30.470.20:FF:000002">
    <property type="entry name" value="Succinate--CoA ligase [ADP-forming] subunit beta"/>
    <property type="match status" value="1"/>
</dbReference>
<dbReference type="FunFam" id="3.40.50.261:FF:000001">
    <property type="entry name" value="Succinate--CoA ligase [ADP-forming] subunit beta"/>
    <property type="match status" value="1"/>
</dbReference>
<dbReference type="Gene3D" id="3.30.1490.20">
    <property type="entry name" value="ATP-grasp fold, A domain"/>
    <property type="match status" value="1"/>
</dbReference>
<dbReference type="Gene3D" id="3.30.470.20">
    <property type="entry name" value="ATP-grasp fold, B domain"/>
    <property type="match status" value="1"/>
</dbReference>
<dbReference type="Gene3D" id="3.40.50.261">
    <property type="entry name" value="Succinyl-CoA synthetase domains"/>
    <property type="match status" value="1"/>
</dbReference>
<dbReference type="HAMAP" id="MF_00558">
    <property type="entry name" value="Succ_CoA_beta"/>
    <property type="match status" value="1"/>
</dbReference>
<dbReference type="InterPro" id="IPR011761">
    <property type="entry name" value="ATP-grasp"/>
</dbReference>
<dbReference type="InterPro" id="IPR013650">
    <property type="entry name" value="ATP-grasp_succ-CoA_synth-type"/>
</dbReference>
<dbReference type="InterPro" id="IPR013815">
    <property type="entry name" value="ATP_grasp_subdomain_1"/>
</dbReference>
<dbReference type="InterPro" id="IPR017866">
    <property type="entry name" value="Succ-CoA_synthase_bsu_CS"/>
</dbReference>
<dbReference type="InterPro" id="IPR005811">
    <property type="entry name" value="SUCC_ACL_C"/>
</dbReference>
<dbReference type="InterPro" id="IPR005809">
    <property type="entry name" value="Succ_CoA_ligase-like_bsu"/>
</dbReference>
<dbReference type="InterPro" id="IPR016102">
    <property type="entry name" value="Succinyl-CoA_synth-like"/>
</dbReference>
<dbReference type="NCBIfam" id="NF001913">
    <property type="entry name" value="PRK00696.1"/>
    <property type="match status" value="1"/>
</dbReference>
<dbReference type="NCBIfam" id="TIGR01016">
    <property type="entry name" value="sucCoAbeta"/>
    <property type="match status" value="1"/>
</dbReference>
<dbReference type="PANTHER" id="PTHR11815:SF10">
    <property type="entry name" value="SUCCINATE--COA LIGASE [GDP-FORMING] SUBUNIT BETA, MITOCHONDRIAL"/>
    <property type="match status" value="1"/>
</dbReference>
<dbReference type="PANTHER" id="PTHR11815">
    <property type="entry name" value="SUCCINYL-COA SYNTHETASE BETA CHAIN"/>
    <property type="match status" value="1"/>
</dbReference>
<dbReference type="Pfam" id="PF08442">
    <property type="entry name" value="ATP-grasp_2"/>
    <property type="match status" value="1"/>
</dbReference>
<dbReference type="Pfam" id="PF00549">
    <property type="entry name" value="Ligase_CoA"/>
    <property type="match status" value="1"/>
</dbReference>
<dbReference type="PIRSF" id="PIRSF001554">
    <property type="entry name" value="SucCS_beta"/>
    <property type="match status" value="1"/>
</dbReference>
<dbReference type="SUPFAM" id="SSF56059">
    <property type="entry name" value="Glutathione synthetase ATP-binding domain-like"/>
    <property type="match status" value="1"/>
</dbReference>
<dbReference type="SUPFAM" id="SSF52210">
    <property type="entry name" value="Succinyl-CoA synthetase domains"/>
    <property type="match status" value="1"/>
</dbReference>
<dbReference type="PROSITE" id="PS50975">
    <property type="entry name" value="ATP_GRASP"/>
    <property type="match status" value="1"/>
</dbReference>
<dbReference type="PROSITE" id="PS01217">
    <property type="entry name" value="SUCCINYL_COA_LIG_3"/>
    <property type="match status" value="1"/>
</dbReference>
<evidence type="ECO:0000255" key="1">
    <source>
        <dbReference type="HAMAP-Rule" id="MF_00558"/>
    </source>
</evidence>
<feature type="chain" id="PRO_1000082270" description="Succinate--CoA ligase [ADP-forming] subunit beta">
    <location>
        <begin position="1"/>
        <end position="398"/>
    </location>
</feature>
<feature type="domain" description="ATP-grasp" evidence="1">
    <location>
        <begin position="9"/>
        <end position="253"/>
    </location>
</feature>
<feature type="binding site" evidence="1">
    <location>
        <position position="46"/>
    </location>
    <ligand>
        <name>ATP</name>
        <dbReference type="ChEBI" id="CHEBI:30616"/>
    </ligand>
</feature>
<feature type="binding site" evidence="1">
    <location>
        <begin position="53"/>
        <end position="55"/>
    </location>
    <ligand>
        <name>ATP</name>
        <dbReference type="ChEBI" id="CHEBI:30616"/>
    </ligand>
</feature>
<feature type="binding site" evidence="1">
    <location>
        <position position="111"/>
    </location>
    <ligand>
        <name>ATP</name>
        <dbReference type="ChEBI" id="CHEBI:30616"/>
    </ligand>
</feature>
<feature type="binding site" evidence="1">
    <location>
        <position position="116"/>
    </location>
    <ligand>
        <name>ATP</name>
        <dbReference type="ChEBI" id="CHEBI:30616"/>
    </ligand>
</feature>
<feature type="binding site" evidence="1">
    <location>
        <position position="208"/>
    </location>
    <ligand>
        <name>Mg(2+)</name>
        <dbReference type="ChEBI" id="CHEBI:18420"/>
    </ligand>
</feature>
<feature type="binding site" evidence="1">
    <location>
        <position position="222"/>
    </location>
    <ligand>
        <name>Mg(2+)</name>
        <dbReference type="ChEBI" id="CHEBI:18420"/>
    </ligand>
</feature>
<feature type="binding site" evidence="1">
    <location>
        <position position="273"/>
    </location>
    <ligand>
        <name>substrate</name>
        <note>ligand shared with subunit alpha</note>
    </ligand>
</feature>
<feature type="binding site" evidence="1">
    <location>
        <begin position="330"/>
        <end position="332"/>
    </location>
    <ligand>
        <name>substrate</name>
        <note>ligand shared with subunit alpha</note>
    </ligand>
</feature>